<comment type="function">
    <text evidence="1">Allows the formation of correctly charged Asn-tRNA(Asn) or Gln-tRNA(Gln) through the transamidation of misacylated Asp-tRNA(Asn) or Glu-tRNA(Gln) in organisms which lack either or both of asparaginyl-tRNA or glutaminyl-tRNA synthetases. The reaction takes place in the presence of glutamine and ATP through an activated phospho-Asp-tRNA(Asn) or phospho-Glu-tRNA(Gln) (By similarity).</text>
</comment>
<comment type="catalytic activity">
    <reaction>
        <text>L-glutamyl-tRNA(Gln) + L-glutamine + ATP + H2O = L-glutaminyl-tRNA(Gln) + L-glutamate + ADP + phosphate + H(+)</text>
        <dbReference type="Rhea" id="RHEA:17521"/>
        <dbReference type="Rhea" id="RHEA-COMP:9681"/>
        <dbReference type="Rhea" id="RHEA-COMP:9684"/>
        <dbReference type="ChEBI" id="CHEBI:15377"/>
        <dbReference type="ChEBI" id="CHEBI:15378"/>
        <dbReference type="ChEBI" id="CHEBI:29985"/>
        <dbReference type="ChEBI" id="CHEBI:30616"/>
        <dbReference type="ChEBI" id="CHEBI:43474"/>
        <dbReference type="ChEBI" id="CHEBI:58359"/>
        <dbReference type="ChEBI" id="CHEBI:78520"/>
        <dbReference type="ChEBI" id="CHEBI:78521"/>
        <dbReference type="ChEBI" id="CHEBI:456216"/>
    </reaction>
</comment>
<comment type="catalytic activity">
    <reaction>
        <text>L-aspartyl-tRNA(Asn) + L-glutamine + ATP + H2O = L-asparaginyl-tRNA(Asn) + L-glutamate + ADP + phosphate + 2 H(+)</text>
        <dbReference type="Rhea" id="RHEA:14513"/>
        <dbReference type="Rhea" id="RHEA-COMP:9674"/>
        <dbReference type="Rhea" id="RHEA-COMP:9677"/>
        <dbReference type="ChEBI" id="CHEBI:15377"/>
        <dbReference type="ChEBI" id="CHEBI:15378"/>
        <dbReference type="ChEBI" id="CHEBI:29985"/>
        <dbReference type="ChEBI" id="CHEBI:30616"/>
        <dbReference type="ChEBI" id="CHEBI:43474"/>
        <dbReference type="ChEBI" id="CHEBI:58359"/>
        <dbReference type="ChEBI" id="CHEBI:78515"/>
        <dbReference type="ChEBI" id="CHEBI:78516"/>
        <dbReference type="ChEBI" id="CHEBI:456216"/>
    </reaction>
</comment>
<comment type="subunit">
    <text evidence="1">Heterotrimer of A, B and C subunits.</text>
</comment>
<comment type="similarity">
    <text evidence="2">Belongs to the GatB/GatE family. GatB subfamily.</text>
</comment>
<sequence>MSAVYADWESVIGLEVHVELNTASKLFSSALNRFGDEPNTNISTVCTGLPGSLPVLNQSAVEKAVLFGCAVEGEISLLSRFDRKSYFYPDSPRNFQITQFEHPIIRGGRIKAIVQGEERYFELAQTHIEDDAGMLKHFGEFAGVDYNRAGVPLIEIVSKPCMFCPEDAVAYATSLVSLLDYIGISDCNMEEGSIRFDVNVSVRPKGSPELRNKVEIKNMNSFAFMAQALEAEKQRQIDEYLNQPNKDPKLVIPAATYRWDPEKKKTVLMRLKESAEDYKYFPEPDLPTLQLTESYIERIRKTLPELPYDKYHRYIQEYGLSEDIASILISDKNIATFFEVACKDCKNFRSLSNWVTVEFGGRCKTLGVKLPSSGIFPEGVAQLVNAIDQGVITGKIAKEIADLMMESPGKNPEEILKEKPELLPMSDEGELQKIIAEVVLANPESIVDYKNGKTKALGFLVGQIMKRTAGKAPPKRVNELLLLELDKG</sequence>
<evidence type="ECO:0000250" key="1"/>
<evidence type="ECO:0000305" key="2"/>
<reference key="1">
    <citation type="journal article" date="1999" name="Nat. Genet.">
        <title>Comparative genomes of Chlamydia pneumoniae and C. trachomatis.</title>
        <authorList>
            <person name="Kalman S."/>
            <person name="Mitchell W.P."/>
            <person name="Marathe R."/>
            <person name="Lammel C.J."/>
            <person name="Fan J."/>
            <person name="Hyman R.W."/>
            <person name="Olinger L."/>
            <person name="Grimwood J."/>
            <person name="Davis R.W."/>
            <person name="Stephens R.S."/>
        </authorList>
    </citation>
    <scope>NUCLEOTIDE SEQUENCE [LARGE SCALE GENOMIC DNA]</scope>
    <source>
        <strain>CWL029</strain>
    </source>
</reference>
<reference key="2">
    <citation type="journal article" date="2000" name="Nucleic Acids Res.">
        <title>Genome sequences of Chlamydia trachomatis MoPn and Chlamydia pneumoniae AR39.</title>
        <authorList>
            <person name="Read T.D."/>
            <person name="Brunham R.C."/>
            <person name="Shen C."/>
            <person name="Gill S.R."/>
            <person name="Heidelberg J.F."/>
            <person name="White O."/>
            <person name="Hickey E.K."/>
            <person name="Peterson J.D."/>
            <person name="Utterback T.R."/>
            <person name="Berry K.J."/>
            <person name="Bass S."/>
            <person name="Linher K.D."/>
            <person name="Weidman J.F."/>
            <person name="Khouri H.M."/>
            <person name="Craven B."/>
            <person name="Bowman C."/>
            <person name="Dodson R.J."/>
            <person name="Gwinn M.L."/>
            <person name="Nelson W.C."/>
            <person name="DeBoy R.T."/>
            <person name="Kolonay J.F."/>
            <person name="McClarty G."/>
            <person name="Salzberg S.L."/>
            <person name="Eisen J.A."/>
            <person name="Fraser C.M."/>
        </authorList>
    </citation>
    <scope>NUCLEOTIDE SEQUENCE [LARGE SCALE GENOMIC DNA]</scope>
    <source>
        <strain>AR39</strain>
    </source>
</reference>
<reference key="3">
    <citation type="journal article" date="2000" name="Nucleic Acids Res.">
        <title>Comparison of whole genome sequences of Chlamydia pneumoniae J138 from Japan and CWL029 from USA.</title>
        <authorList>
            <person name="Shirai M."/>
            <person name="Hirakawa H."/>
            <person name="Kimoto M."/>
            <person name="Tabuchi M."/>
            <person name="Kishi F."/>
            <person name="Ouchi K."/>
            <person name="Shiba T."/>
            <person name="Ishii K."/>
            <person name="Hattori M."/>
            <person name="Kuhara S."/>
            <person name="Nakazawa T."/>
        </authorList>
    </citation>
    <scope>NUCLEOTIDE SEQUENCE [LARGE SCALE GENOMIC DNA]</scope>
    <source>
        <strain>J138</strain>
    </source>
</reference>
<reference key="4">
    <citation type="submission" date="2002-05" db="EMBL/GenBank/DDBJ databases">
        <title>The genome sequence of Chlamydia pneumoniae TW183 and comparison with other Chlamydia strains based on whole genome sequence analysis.</title>
        <authorList>
            <person name="Geng M.M."/>
            <person name="Schuhmacher A."/>
            <person name="Muehldorfer I."/>
            <person name="Bensch K.W."/>
            <person name="Schaefer K.P."/>
            <person name="Schneider S."/>
            <person name="Pohl T."/>
            <person name="Essig A."/>
            <person name="Marre R."/>
            <person name="Melchers K."/>
        </authorList>
    </citation>
    <scope>NUCLEOTIDE SEQUENCE [LARGE SCALE GENOMIC DNA]</scope>
    <source>
        <strain>TW-183</strain>
    </source>
</reference>
<proteinExistence type="inferred from homology"/>
<protein>
    <recommendedName>
        <fullName>Aspartyl/glutamyl-tRNA(Asn/Gln) amidotransferase subunit B</fullName>
        <shortName>Asp/Glu-ADT subunit B</shortName>
        <ecNumber>6.3.5.-</ecNumber>
    </recommendedName>
</protein>
<name>GATB_CHLPN</name>
<feature type="chain" id="PRO_0000148777" description="Aspartyl/glutamyl-tRNA(Asn/Gln) amidotransferase subunit B">
    <location>
        <begin position="1"/>
        <end position="488"/>
    </location>
</feature>
<feature type="sequence conflict" description="In Ref. 3; BAA98214." evidence="2" ref="3">
    <original>T</original>
    <variation>S</variation>
    <location>
        <position position="356"/>
    </location>
</feature>
<dbReference type="EC" id="6.3.5.-"/>
<dbReference type="EMBL" id="AE001363">
    <property type="protein sequence ID" value="AAD18162.1"/>
    <property type="molecule type" value="Genomic_DNA"/>
</dbReference>
<dbReference type="EMBL" id="AE002161">
    <property type="protein sequence ID" value="AAF38571.1"/>
    <property type="molecule type" value="Genomic_DNA"/>
</dbReference>
<dbReference type="EMBL" id="BA000008">
    <property type="protein sequence ID" value="BAA98214.1"/>
    <property type="molecule type" value="Genomic_DNA"/>
</dbReference>
<dbReference type="EMBL" id="AE009440">
    <property type="protein sequence ID" value="AAP97938.1"/>
    <property type="molecule type" value="Genomic_DNA"/>
</dbReference>
<dbReference type="PIR" id="A72131">
    <property type="entry name" value="A72131"/>
</dbReference>
<dbReference type="PIR" id="D86491">
    <property type="entry name" value="D86491"/>
</dbReference>
<dbReference type="RefSeq" id="NP_224217.1">
    <property type="nucleotide sequence ID" value="NC_000922.1"/>
</dbReference>
<dbReference type="RefSeq" id="WP_010882659.1">
    <property type="nucleotide sequence ID" value="NZ_LN847257.1"/>
</dbReference>
<dbReference type="SMR" id="Q9Z9G6"/>
<dbReference type="STRING" id="406984.CPK_ORF00505"/>
<dbReference type="GeneID" id="45050053"/>
<dbReference type="KEGG" id="cpa:CP_0771"/>
<dbReference type="KEGG" id="cpj:gatB"/>
<dbReference type="KEGG" id="cpn:CPn_0004"/>
<dbReference type="KEGG" id="cpt:CpB0005"/>
<dbReference type="PATRIC" id="fig|115713.3.peg.5"/>
<dbReference type="eggNOG" id="COG0064">
    <property type="taxonomic scope" value="Bacteria"/>
</dbReference>
<dbReference type="HOGENOM" id="CLU_019240_0_0_0"/>
<dbReference type="OrthoDB" id="9804078at2"/>
<dbReference type="Proteomes" id="UP000000583">
    <property type="component" value="Chromosome"/>
</dbReference>
<dbReference type="Proteomes" id="UP000000801">
    <property type="component" value="Chromosome"/>
</dbReference>
<dbReference type="GO" id="GO:0050566">
    <property type="term" value="F:asparaginyl-tRNA synthase (glutamine-hydrolyzing) activity"/>
    <property type="evidence" value="ECO:0007669"/>
    <property type="project" value="RHEA"/>
</dbReference>
<dbReference type="GO" id="GO:0005524">
    <property type="term" value="F:ATP binding"/>
    <property type="evidence" value="ECO:0007669"/>
    <property type="project" value="UniProtKB-KW"/>
</dbReference>
<dbReference type="GO" id="GO:0050567">
    <property type="term" value="F:glutaminyl-tRNA synthase (glutamine-hydrolyzing) activity"/>
    <property type="evidence" value="ECO:0007669"/>
    <property type="project" value="UniProtKB-UniRule"/>
</dbReference>
<dbReference type="GO" id="GO:0070681">
    <property type="term" value="P:glutaminyl-tRNAGln biosynthesis via transamidation"/>
    <property type="evidence" value="ECO:0007669"/>
    <property type="project" value="TreeGrafter"/>
</dbReference>
<dbReference type="GO" id="GO:0006412">
    <property type="term" value="P:translation"/>
    <property type="evidence" value="ECO:0007669"/>
    <property type="project" value="UniProtKB-UniRule"/>
</dbReference>
<dbReference type="FunFam" id="1.10.10.410:FF:000001">
    <property type="entry name" value="Aspartyl/glutamyl-tRNA(Asn/Gln) amidotransferase subunit B"/>
    <property type="match status" value="1"/>
</dbReference>
<dbReference type="Gene3D" id="1.10.10.410">
    <property type="match status" value="1"/>
</dbReference>
<dbReference type="Gene3D" id="1.10.150.380">
    <property type="entry name" value="GatB domain, N-terminal subdomain"/>
    <property type="match status" value="1"/>
</dbReference>
<dbReference type="HAMAP" id="MF_00121">
    <property type="entry name" value="GatB"/>
    <property type="match status" value="1"/>
</dbReference>
<dbReference type="InterPro" id="IPR017959">
    <property type="entry name" value="Asn/Gln-tRNA_amidoTrfase_suB/E"/>
</dbReference>
<dbReference type="InterPro" id="IPR006075">
    <property type="entry name" value="Asn/Gln-tRNA_Trfase_suB/E_cat"/>
</dbReference>
<dbReference type="InterPro" id="IPR018027">
    <property type="entry name" value="Asn/Gln_amidotransferase"/>
</dbReference>
<dbReference type="InterPro" id="IPR003789">
    <property type="entry name" value="Asn/Gln_tRNA_amidoTrase-B-like"/>
</dbReference>
<dbReference type="InterPro" id="IPR004413">
    <property type="entry name" value="GatB"/>
</dbReference>
<dbReference type="InterPro" id="IPR042114">
    <property type="entry name" value="GatB_C_1"/>
</dbReference>
<dbReference type="InterPro" id="IPR023168">
    <property type="entry name" value="GatB_Yqey_C_2"/>
</dbReference>
<dbReference type="InterPro" id="IPR017958">
    <property type="entry name" value="Gln-tRNA_amidoTrfase_suB_CS"/>
</dbReference>
<dbReference type="InterPro" id="IPR014746">
    <property type="entry name" value="Gln_synth/guanido_kin_cat_dom"/>
</dbReference>
<dbReference type="NCBIfam" id="TIGR00133">
    <property type="entry name" value="gatB"/>
    <property type="match status" value="1"/>
</dbReference>
<dbReference type="NCBIfam" id="NF004012">
    <property type="entry name" value="PRK05477.1-2"/>
    <property type="match status" value="1"/>
</dbReference>
<dbReference type="NCBIfam" id="NF004014">
    <property type="entry name" value="PRK05477.1-4"/>
    <property type="match status" value="1"/>
</dbReference>
<dbReference type="PANTHER" id="PTHR11659">
    <property type="entry name" value="GLUTAMYL-TRNA GLN AMIDOTRANSFERASE SUBUNIT B MITOCHONDRIAL AND PROKARYOTIC PET112-RELATED"/>
    <property type="match status" value="1"/>
</dbReference>
<dbReference type="PANTHER" id="PTHR11659:SF0">
    <property type="entry name" value="GLUTAMYL-TRNA(GLN) AMIDOTRANSFERASE SUBUNIT B, MITOCHONDRIAL"/>
    <property type="match status" value="1"/>
</dbReference>
<dbReference type="Pfam" id="PF02934">
    <property type="entry name" value="GatB_N"/>
    <property type="match status" value="1"/>
</dbReference>
<dbReference type="Pfam" id="PF02637">
    <property type="entry name" value="GatB_Yqey"/>
    <property type="match status" value="1"/>
</dbReference>
<dbReference type="SMART" id="SM00845">
    <property type="entry name" value="GatB_Yqey"/>
    <property type="match status" value="1"/>
</dbReference>
<dbReference type="SUPFAM" id="SSF89095">
    <property type="entry name" value="GatB/YqeY motif"/>
    <property type="match status" value="1"/>
</dbReference>
<dbReference type="SUPFAM" id="SSF55931">
    <property type="entry name" value="Glutamine synthetase/guanido kinase"/>
    <property type="match status" value="1"/>
</dbReference>
<dbReference type="PROSITE" id="PS01234">
    <property type="entry name" value="GATB"/>
    <property type="match status" value="1"/>
</dbReference>
<accession>Q9Z9G6</accession>
<accession>Q9JQK8</accession>
<accession>Q9JSL0</accession>
<gene>
    <name type="primary">gatB</name>
    <name type="ordered locus">CPn_0004</name>
    <name type="ordered locus">CP_0771</name>
    <name type="ordered locus">CpB0005</name>
</gene>
<keyword id="KW-0067">ATP-binding</keyword>
<keyword id="KW-0436">Ligase</keyword>
<keyword id="KW-0547">Nucleotide-binding</keyword>
<keyword id="KW-0648">Protein biosynthesis</keyword>
<organism>
    <name type="scientific">Chlamydia pneumoniae</name>
    <name type="common">Chlamydophila pneumoniae</name>
    <dbReference type="NCBI Taxonomy" id="83558"/>
    <lineage>
        <taxon>Bacteria</taxon>
        <taxon>Pseudomonadati</taxon>
        <taxon>Chlamydiota</taxon>
        <taxon>Chlamydiia</taxon>
        <taxon>Chlamydiales</taxon>
        <taxon>Chlamydiaceae</taxon>
        <taxon>Chlamydia/Chlamydophila group</taxon>
        <taxon>Chlamydia</taxon>
    </lineage>
</organism>